<keyword id="KW-0067">ATP-binding</keyword>
<keyword id="KW-0143">Chaperone</keyword>
<keyword id="KW-0547">Nucleotide-binding</keyword>
<proteinExistence type="inferred from homology"/>
<gene>
    <name evidence="1" type="primary">hscA</name>
    <name type="ordered locus">BPP2032</name>
</gene>
<comment type="function">
    <text evidence="1">Chaperone involved in the maturation of iron-sulfur cluster-containing proteins. Has a low intrinsic ATPase activity which is markedly stimulated by HscB.</text>
</comment>
<comment type="similarity">
    <text evidence="1">Belongs to the heat shock protein 70 family.</text>
</comment>
<comment type="sequence caution" evidence="2">
    <conflict type="erroneous initiation">
        <sequence resource="EMBL-CDS" id="CAE37332"/>
    </conflict>
</comment>
<name>HSCA_BORPA</name>
<sequence length="620" mass="65310">MALLQISEPGDSPAPHQRKLAVGIDLGTTNSLVAAVRSSVPEVLADAQGQVLLPSAVRYLDGGAVRIGREALLEQARDPLNTIVSVKRFMGRSAADALASGAPYEFVDAPGMVRLRTVQGDLSPVEVSAQILAVLRQRAEDVLGDDLVGAVITVPAYFDDAQRQATRDAARLAGLNVLRLLNEPTAAAIAYGLDQAAEGIYAVYDLGGGTFDISILRLTQGVFEVIATGGDTALGGDDFDSAIVAHACAGEDVAALPVADRRALLVAARAAREALTDQAQAPFEVTLRDGRAIQATLTRAQFEQLAEPLVGRTLESARRALRDAGLAVGDVRGVVMVGGATRMPVVRQQVGALFGTEPLTNLDPDQVVALGAALQANLLAGNRPPGEDWLLLDVIPLSLGLETMGGLVERIIPRNSTIPVARAQEFTTFKDGQTAMSVHVVQGERDLVSDCRSLARFELRGIPPMVAGAARIRVTFQVDADGLLSVTAREQSTGVEAAVAVKPSYGLSDDEIARMLADSVTQADSDARARMLREQQVEARQLVESVGAALAADGDLLDPAERATVDQRLQAAAQAQSLDDVEAVRAAVQALSDATEEFAARRMDRSIRAALAGRKLDELA</sequence>
<organism>
    <name type="scientific">Bordetella parapertussis (strain 12822 / ATCC BAA-587 / NCTC 13253)</name>
    <dbReference type="NCBI Taxonomy" id="257311"/>
    <lineage>
        <taxon>Bacteria</taxon>
        <taxon>Pseudomonadati</taxon>
        <taxon>Pseudomonadota</taxon>
        <taxon>Betaproteobacteria</taxon>
        <taxon>Burkholderiales</taxon>
        <taxon>Alcaligenaceae</taxon>
        <taxon>Bordetella</taxon>
    </lineage>
</organism>
<protein>
    <recommendedName>
        <fullName evidence="1">Chaperone protein HscA homolog</fullName>
    </recommendedName>
</protein>
<evidence type="ECO:0000255" key="1">
    <source>
        <dbReference type="HAMAP-Rule" id="MF_00679"/>
    </source>
</evidence>
<evidence type="ECO:0000305" key="2"/>
<accession>Q7W8U9</accession>
<reference key="1">
    <citation type="journal article" date="2003" name="Nat. Genet.">
        <title>Comparative analysis of the genome sequences of Bordetella pertussis, Bordetella parapertussis and Bordetella bronchiseptica.</title>
        <authorList>
            <person name="Parkhill J."/>
            <person name="Sebaihia M."/>
            <person name="Preston A."/>
            <person name="Murphy L.D."/>
            <person name="Thomson N.R."/>
            <person name="Harris D.E."/>
            <person name="Holden M.T.G."/>
            <person name="Churcher C.M."/>
            <person name="Bentley S.D."/>
            <person name="Mungall K.L."/>
            <person name="Cerdeno-Tarraga A.-M."/>
            <person name="Temple L."/>
            <person name="James K.D."/>
            <person name="Harris B."/>
            <person name="Quail M.A."/>
            <person name="Achtman M."/>
            <person name="Atkin R."/>
            <person name="Baker S."/>
            <person name="Basham D."/>
            <person name="Bason N."/>
            <person name="Cherevach I."/>
            <person name="Chillingworth T."/>
            <person name="Collins M."/>
            <person name="Cronin A."/>
            <person name="Davis P."/>
            <person name="Doggett J."/>
            <person name="Feltwell T."/>
            <person name="Goble A."/>
            <person name="Hamlin N."/>
            <person name="Hauser H."/>
            <person name="Holroyd S."/>
            <person name="Jagels K."/>
            <person name="Leather S."/>
            <person name="Moule S."/>
            <person name="Norberczak H."/>
            <person name="O'Neil S."/>
            <person name="Ormond D."/>
            <person name="Price C."/>
            <person name="Rabbinowitsch E."/>
            <person name="Rutter S."/>
            <person name="Sanders M."/>
            <person name="Saunders D."/>
            <person name="Seeger K."/>
            <person name="Sharp S."/>
            <person name="Simmonds M."/>
            <person name="Skelton J."/>
            <person name="Squares R."/>
            <person name="Squares S."/>
            <person name="Stevens K."/>
            <person name="Unwin L."/>
            <person name="Whitehead S."/>
            <person name="Barrell B.G."/>
            <person name="Maskell D.J."/>
        </authorList>
    </citation>
    <scope>NUCLEOTIDE SEQUENCE [LARGE SCALE GENOMIC DNA]</scope>
    <source>
        <strain>12822 / ATCC BAA-587 / NCTC 13253</strain>
    </source>
</reference>
<feature type="chain" id="PRO_0000078617" description="Chaperone protein HscA homolog">
    <location>
        <begin position="1"/>
        <end position="620"/>
    </location>
</feature>
<dbReference type="EMBL" id="BX640429">
    <property type="protein sequence ID" value="CAE37332.1"/>
    <property type="status" value="ALT_INIT"/>
    <property type="molecule type" value="Genomic_DNA"/>
</dbReference>
<dbReference type="RefSeq" id="WP_010928328.1">
    <property type="nucleotide sequence ID" value="NC_002928.3"/>
</dbReference>
<dbReference type="SMR" id="Q7W8U9"/>
<dbReference type="GeneID" id="93203806"/>
<dbReference type="KEGG" id="bpa:BPP2032"/>
<dbReference type="HOGENOM" id="CLU_005965_2_3_4"/>
<dbReference type="Proteomes" id="UP000001421">
    <property type="component" value="Chromosome"/>
</dbReference>
<dbReference type="GO" id="GO:0005524">
    <property type="term" value="F:ATP binding"/>
    <property type="evidence" value="ECO:0007669"/>
    <property type="project" value="UniProtKB-KW"/>
</dbReference>
<dbReference type="GO" id="GO:0016887">
    <property type="term" value="F:ATP hydrolysis activity"/>
    <property type="evidence" value="ECO:0007669"/>
    <property type="project" value="UniProtKB-UniRule"/>
</dbReference>
<dbReference type="GO" id="GO:0140662">
    <property type="term" value="F:ATP-dependent protein folding chaperone"/>
    <property type="evidence" value="ECO:0007669"/>
    <property type="project" value="InterPro"/>
</dbReference>
<dbReference type="GO" id="GO:0051082">
    <property type="term" value="F:unfolded protein binding"/>
    <property type="evidence" value="ECO:0007669"/>
    <property type="project" value="InterPro"/>
</dbReference>
<dbReference type="GO" id="GO:0016226">
    <property type="term" value="P:iron-sulfur cluster assembly"/>
    <property type="evidence" value="ECO:0007669"/>
    <property type="project" value="InterPro"/>
</dbReference>
<dbReference type="FunFam" id="3.30.420.40:FF:000046">
    <property type="entry name" value="Chaperone protein HscA"/>
    <property type="match status" value="1"/>
</dbReference>
<dbReference type="FunFam" id="2.60.34.10:FF:000005">
    <property type="entry name" value="Chaperone protein HscA homolog"/>
    <property type="match status" value="1"/>
</dbReference>
<dbReference type="Gene3D" id="1.20.1270.10">
    <property type="match status" value="1"/>
</dbReference>
<dbReference type="Gene3D" id="3.30.420.40">
    <property type="match status" value="2"/>
</dbReference>
<dbReference type="Gene3D" id="3.90.640.10">
    <property type="entry name" value="Actin, Chain A, domain 4"/>
    <property type="match status" value="1"/>
</dbReference>
<dbReference type="Gene3D" id="2.60.34.10">
    <property type="entry name" value="Substrate Binding Domain Of DNAk, Chain A, domain 1"/>
    <property type="match status" value="1"/>
</dbReference>
<dbReference type="HAMAP" id="MF_00679">
    <property type="entry name" value="HscA"/>
    <property type="match status" value="1"/>
</dbReference>
<dbReference type="InterPro" id="IPR043129">
    <property type="entry name" value="ATPase_NBD"/>
</dbReference>
<dbReference type="InterPro" id="IPR018181">
    <property type="entry name" value="Heat_shock_70_CS"/>
</dbReference>
<dbReference type="InterPro" id="IPR029048">
    <property type="entry name" value="HSP70_C_sf"/>
</dbReference>
<dbReference type="InterPro" id="IPR029047">
    <property type="entry name" value="HSP70_peptide-bd_sf"/>
</dbReference>
<dbReference type="InterPro" id="IPR013126">
    <property type="entry name" value="Hsp_70_fam"/>
</dbReference>
<dbReference type="InterPro" id="IPR010236">
    <property type="entry name" value="ISC_FeS_clus_asmbl_HscA"/>
</dbReference>
<dbReference type="NCBIfam" id="TIGR01991">
    <property type="entry name" value="HscA"/>
    <property type="match status" value="1"/>
</dbReference>
<dbReference type="NCBIfam" id="NF003520">
    <property type="entry name" value="PRK05183.1"/>
    <property type="match status" value="1"/>
</dbReference>
<dbReference type="PANTHER" id="PTHR19375">
    <property type="entry name" value="HEAT SHOCK PROTEIN 70KDA"/>
    <property type="match status" value="1"/>
</dbReference>
<dbReference type="Pfam" id="PF00012">
    <property type="entry name" value="HSP70"/>
    <property type="match status" value="1"/>
</dbReference>
<dbReference type="PRINTS" id="PR00301">
    <property type="entry name" value="HEATSHOCK70"/>
</dbReference>
<dbReference type="SUPFAM" id="SSF53067">
    <property type="entry name" value="Actin-like ATPase domain"/>
    <property type="match status" value="2"/>
</dbReference>
<dbReference type="SUPFAM" id="SSF100934">
    <property type="entry name" value="Heat shock protein 70kD (HSP70), C-terminal subdomain"/>
    <property type="match status" value="1"/>
</dbReference>
<dbReference type="SUPFAM" id="SSF100920">
    <property type="entry name" value="Heat shock protein 70kD (HSP70), peptide-binding domain"/>
    <property type="match status" value="1"/>
</dbReference>
<dbReference type="PROSITE" id="PS00297">
    <property type="entry name" value="HSP70_1"/>
    <property type="match status" value="1"/>
</dbReference>
<dbReference type="PROSITE" id="PS00329">
    <property type="entry name" value="HSP70_2"/>
    <property type="match status" value="1"/>
</dbReference>
<dbReference type="PROSITE" id="PS01036">
    <property type="entry name" value="HSP70_3"/>
    <property type="match status" value="1"/>
</dbReference>